<protein>
    <recommendedName>
        <fullName evidence="1">Succinate--CoA ligase [ADP-forming] subunit alpha-1, mitochondrial</fullName>
        <ecNumber evidence="1">6.2.1.5</ecNumber>
    </recommendedName>
    <alternativeName>
        <fullName evidence="1">Succinyl-CoA synthetase subunit alpha-1</fullName>
        <shortName evidence="1">SCS-alpha-1</shortName>
    </alternativeName>
</protein>
<organism>
    <name type="scientific">Solanum lycopersicum</name>
    <name type="common">Tomato</name>
    <name type="synonym">Lycopersicon esculentum</name>
    <dbReference type="NCBI Taxonomy" id="4081"/>
    <lineage>
        <taxon>Eukaryota</taxon>
        <taxon>Viridiplantae</taxon>
        <taxon>Streptophyta</taxon>
        <taxon>Embryophyta</taxon>
        <taxon>Tracheophyta</taxon>
        <taxon>Spermatophyta</taxon>
        <taxon>Magnoliopsida</taxon>
        <taxon>eudicotyledons</taxon>
        <taxon>Gunneridae</taxon>
        <taxon>Pentapetalae</taxon>
        <taxon>asterids</taxon>
        <taxon>lamiids</taxon>
        <taxon>Solanales</taxon>
        <taxon>Solanaceae</taxon>
        <taxon>Solanoideae</taxon>
        <taxon>Solaneae</taxon>
        <taxon>Solanum</taxon>
        <taxon>Solanum subgen. Lycopersicon</taxon>
    </lineage>
</organism>
<comment type="function">
    <text evidence="1">Succinyl-CoA synthetase functions in the citric acid cycle (TCA), coupling the hydrolysis of succinyl-CoA to the synthesis of ATP and thus represents the only step of substrate-level phosphorylation in the TCA. The alpha subunit of the enzyme binds the substrates coenzyme A and phosphate, while succinate binding and nucleotide specificity is provided by the beta subunit.</text>
</comment>
<comment type="catalytic activity">
    <reaction evidence="1 2">
        <text>succinate + ATP + CoA = succinyl-CoA + ADP + phosphate</text>
        <dbReference type="Rhea" id="RHEA:17661"/>
        <dbReference type="ChEBI" id="CHEBI:30031"/>
        <dbReference type="ChEBI" id="CHEBI:30616"/>
        <dbReference type="ChEBI" id="CHEBI:43474"/>
        <dbReference type="ChEBI" id="CHEBI:57287"/>
        <dbReference type="ChEBI" id="CHEBI:57292"/>
        <dbReference type="ChEBI" id="CHEBI:456216"/>
        <dbReference type="EC" id="6.2.1.5"/>
    </reaction>
</comment>
<comment type="pathway">
    <text evidence="1">Carbohydrate metabolism; tricarboxylic acid cycle; succinate from succinyl-CoA (ligase route): step 1/1.</text>
</comment>
<comment type="subunit">
    <text evidence="1">Heterodimer of an alpha and a beta subunit.</text>
</comment>
<comment type="subcellular location">
    <subcellularLocation>
        <location evidence="1 2">Mitochondrion</location>
    </subcellularLocation>
</comment>
<comment type="tissue specificity">
    <text evidence="2">Expressed in roots, stems, flowers, leaves and fruits.</text>
</comment>
<comment type="similarity">
    <text evidence="1">Belongs to the succinate/malate CoA ligase alpha subunit family.</text>
</comment>
<gene>
    <name type="primary">SCOA</name>
</gene>
<keyword id="KW-0436">Ligase</keyword>
<keyword id="KW-0496">Mitochondrion</keyword>
<keyword id="KW-0547">Nucleotide-binding</keyword>
<keyword id="KW-1185">Reference proteome</keyword>
<keyword id="KW-0809">Transit peptide</keyword>
<keyword id="KW-0816">Tricarboxylic acid cycle</keyword>
<evidence type="ECO:0000255" key="1">
    <source>
        <dbReference type="HAMAP-Rule" id="MF_03222"/>
    </source>
</evidence>
<evidence type="ECO:0000269" key="2">
    <source>
    </source>
</evidence>
<accession>Q8GTQ9</accession>
<feature type="transit peptide" description="Mitochondrion" evidence="1">
    <location>
        <begin position="1"/>
        <end position="23"/>
    </location>
</feature>
<feature type="chain" id="PRO_0000402564" description="Succinate--CoA ligase [ADP-forming] subunit alpha-1, mitochondrial">
    <location>
        <begin position="24"/>
        <end position="332"/>
    </location>
</feature>
<feature type="active site" description="Tele-phosphohistidine intermediate" evidence="1">
    <location>
        <position position="285"/>
    </location>
</feature>
<feature type="binding site" evidence="1">
    <location>
        <begin position="53"/>
        <end position="56"/>
    </location>
    <ligand>
        <name>CoA</name>
        <dbReference type="ChEBI" id="CHEBI:57287"/>
    </ligand>
</feature>
<feature type="binding site" evidence="1">
    <location>
        <position position="79"/>
    </location>
    <ligand>
        <name>CoA</name>
        <dbReference type="ChEBI" id="CHEBI:57287"/>
    </ligand>
</feature>
<feature type="binding site" evidence="1">
    <location>
        <begin position="132"/>
        <end position="134"/>
    </location>
    <ligand>
        <name>CoA</name>
        <dbReference type="ChEBI" id="CHEBI:57287"/>
    </ligand>
</feature>
<feature type="binding site" evidence="1">
    <location>
        <position position="196"/>
    </location>
    <ligand>
        <name>substrate</name>
        <note>ligand shared with subunit beta</note>
    </ligand>
</feature>
<name>SUCA1_SOLLC</name>
<reference key="1">
    <citation type="journal article" date="2005" name="Plant Mol. Biol.">
        <title>Identification and characterisation of the alpha and beta subunits of succinyl CoA ligase of tomato.</title>
        <authorList>
            <person name="Studart-Guimaraes C."/>
            <person name="Gibon Y."/>
            <person name="Frankel N."/>
            <person name="Wood C.C."/>
            <person name="Zanor M.I."/>
            <person name="Fernie A.R."/>
            <person name="Carrari F."/>
        </authorList>
    </citation>
    <scope>NUCLEOTIDE SEQUENCE [MRNA]</scope>
    <scope>CATALYTIC ACTIVITY</scope>
    <scope>SUBCELLULAR LOCATION</scope>
    <scope>TISSUE SPECIFICITY</scope>
    <source>
        <strain>cv. Moneymaker</strain>
        <tissue>Leaf</tissue>
    </source>
</reference>
<sequence length="332" mass="34684">MARQATKLIANLSKKLSSSNPHTRCSEQTVWIGAAPPAVFVDKNTRVICQGITGKNGTFHTEQAIEYGTKMVGGVTPKKGGTEHLGLPVFNTVEEAKAETKANASVIYVPPPFAAAAIMEGLEAELDLIVCITEGIPQHDMVRVKAALKKQSRTRLIGPNCPGIIKPGECKIGIMPGYIHKPGRIGIVSRSGTLTYEAVFQTTAVGLGQSTCVGIGGDPFNGTNFVDCLEKFIADPQTEGIVLIGEIGGTAEEDAAALIKESGTQKPVVAFIAGLTAPPGRRMGHAGAIVSGGKGTAQDKIKALKEAGVTVCESPAKIGVSMLEVFKQRGLV</sequence>
<proteinExistence type="evidence at protein level"/>
<dbReference type="EC" id="6.2.1.5" evidence="1"/>
<dbReference type="EMBL" id="AY167586">
    <property type="protein sequence ID" value="AAN86619.1"/>
    <property type="molecule type" value="mRNA"/>
</dbReference>
<dbReference type="SMR" id="Q8GTQ9"/>
<dbReference type="FunCoup" id="Q8GTQ9">
    <property type="interactions" value="3227"/>
</dbReference>
<dbReference type="STRING" id="4081.Q8GTQ9"/>
<dbReference type="PaxDb" id="4081-Solyc01g007910.2.1"/>
<dbReference type="eggNOG" id="KOG1255">
    <property type="taxonomic scope" value="Eukaryota"/>
</dbReference>
<dbReference type="InParanoid" id="Q8GTQ9"/>
<dbReference type="UniPathway" id="UPA00223">
    <property type="reaction ID" value="UER00999"/>
</dbReference>
<dbReference type="Proteomes" id="UP000004994">
    <property type="component" value="Unplaced"/>
</dbReference>
<dbReference type="ExpressionAtlas" id="Q8GTQ9">
    <property type="expression patterns" value="baseline and differential"/>
</dbReference>
<dbReference type="GO" id="GO:0005739">
    <property type="term" value="C:mitochondrion"/>
    <property type="evidence" value="ECO:0000314"/>
    <property type="project" value="UniProtKB"/>
</dbReference>
<dbReference type="GO" id="GO:0009361">
    <property type="term" value="C:succinate-CoA ligase complex (ADP-forming)"/>
    <property type="evidence" value="ECO:0000318"/>
    <property type="project" value="GO_Central"/>
</dbReference>
<dbReference type="GO" id="GO:0000166">
    <property type="term" value="F:nucleotide binding"/>
    <property type="evidence" value="ECO:0007669"/>
    <property type="project" value="UniProtKB-KW"/>
</dbReference>
<dbReference type="GO" id="GO:0004775">
    <property type="term" value="F:succinate-CoA ligase (ADP-forming) activity"/>
    <property type="evidence" value="ECO:0000314"/>
    <property type="project" value="UniProtKB"/>
</dbReference>
<dbReference type="GO" id="GO:0004776">
    <property type="term" value="F:succinate-CoA ligase (GDP-forming) activity"/>
    <property type="evidence" value="ECO:0000318"/>
    <property type="project" value="GO_Central"/>
</dbReference>
<dbReference type="GO" id="GO:0006105">
    <property type="term" value="P:succinate metabolic process"/>
    <property type="evidence" value="ECO:0000314"/>
    <property type="project" value="UniProtKB"/>
</dbReference>
<dbReference type="GO" id="GO:0006104">
    <property type="term" value="P:succinyl-CoA metabolic process"/>
    <property type="evidence" value="ECO:0000314"/>
    <property type="project" value="UniProtKB"/>
</dbReference>
<dbReference type="GO" id="GO:0006099">
    <property type="term" value="P:tricarboxylic acid cycle"/>
    <property type="evidence" value="ECO:0000314"/>
    <property type="project" value="UniProtKB"/>
</dbReference>
<dbReference type="FunFam" id="3.40.50.720:FF:000002">
    <property type="entry name" value="Succinate--CoA ligase [ADP-forming] subunit alpha"/>
    <property type="match status" value="1"/>
</dbReference>
<dbReference type="FunFam" id="3.40.50.261:FF:000005">
    <property type="entry name" value="Succinate--CoA ligase [ADP-forming] subunit alpha, mitochondrial"/>
    <property type="match status" value="1"/>
</dbReference>
<dbReference type="Gene3D" id="3.40.50.720">
    <property type="entry name" value="NAD(P)-binding Rossmann-like Domain"/>
    <property type="match status" value="1"/>
</dbReference>
<dbReference type="Gene3D" id="3.40.50.261">
    <property type="entry name" value="Succinyl-CoA synthetase domains"/>
    <property type="match status" value="1"/>
</dbReference>
<dbReference type="HAMAP" id="MF_01988">
    <property type="entry name" value="Succ_CoA_alpha"/>
    <property type="match status" value="1"/>
</dbReference>
<dbReference type="InterPro" id="IPR017440">
    <property type="entry name" value="Cit_synth/succinyl-CoA_lig_AS"/>
</dbReference>
<dbReference type="InterPro" id="IPR033847">
    <property type="entry name" value="Citrt_syn/SCS-alpha_CS"/>
</dbReference>
<dbReference type="InterPro" id="IPR003781">
    <property type="entry name" value="CoA-bd"/>
</dbReference>
<dbReference type="InterPro" id="IPR005810">
    <property type="entry name" value="CoA_lig_alpha"/>
</dbReference>
<dbReference type="InterPro" id="IPR036291">
    <property type="entry name" value="NAD(P)-bd_dom_sf"/>
</dbReference>
<dbReference type="InterPro" id="IPR005811">
    <property type="entry name" value="SUCC_ACL_C"/>
</dbReference>
<dbReference type="InterPro" id="IPR016102">
    <property type="entry name" value="Succinyl-CoA_synth-like"/>
</dbReference>
<dbReference type="NCBIfam" id="NF004230">
    <property type="entry name" value="PRK05678.1"/>
    <property type="match status" value="1"/>
</dbReference>
<dbReference type="NCBIfam" id="TIGR01019">
    <property type="entry name" value="sucCoAalpha"/>
    <property type="match status" value="1"/>
</dbReference>
<dbReference type="PANTHER" id="PTHR11117:SF2">
    <property type="entry name" value="SUCCINATE--COA LIGASE [ADP_GDP-FORMING] SUBUNIT ALPHA, MITOCHONDRIAL"/>
    <property type="match status" value="1"/>
</dbReference>
<dbReference type="PANTHER" id="PTHR11117">
    <property type="entry name" value="SUCCINYL-COA LIGASE SUBUNIT ALPHA"/>
    <property type="match status" value="1"/>
</dbReference>
<dbReference type="Pfam" id="PF02629">
    <property type="entry name" value="CoA_binding"/>
    <property type="match status" value="1"/>
</dbReference>
<dbReference type="Pfam" id="PF00549">
    <property type="entry name" value="Ligase_CoA"/>
    <property type="match status" value="1"/>
</dbReference>
<dbReference type="PIRSF" id="PIRSF001553">
    <property type="entry name" value="SucCS_alpha"/>
    <property type="match status" value="1"/>
</dbReference>
<dbReference type="PRINTS" id="PR01798">
    <property type="entry name" value="SCOASYNTHASE"/>
</dbReference>
<dbReference type="SMART" id="SM00881">
    <property type="entry name" value="CoA_binding"/>
    <property type="match status" value="1"/>
</dbReference>
<dbReference type="SUPFAM" id="SSF51735">
    <property type="entry name" value="NAD(P)-binding Rossmann-fold domains"/>
    <property type="match status" value="1"/>
</dbReference>
<dbReference type="SUPFAM" id="SSF52210">
    <property type="entry name" value="Succinyl-CoA synthetase domains"/>
    <property type="match status" value="1"/>
</dbReference>
<dbReference type="PROSITE" id="PS01216">
    <property type="entry name" value="SUCCINYL_COA_LIG_1"/>
    <property type="match status" value="1"/>
</dbReference>
<dbReference type="PROSITE" id="PS00399">
    <property type="entry name" value="SUCCINYL_COA_LIG_2"/>
    <property type="match status" value="1"/>
</dbReference>